<protein>
    <recommendedName>
        <fullName>L-lactate dehydrogenase A chain</fullName>
        <shortName>LDH-A</shortName>
        <ecNumber evidence="2">1.1.1.27</ecNumber>
    </recommendedName>
</protein>
<gene>
    <name type="primary">LDHA</name>
</gene>
<proteinExistence type="evidence at transcript level"/>
<organism>
    <name type="scientific">Trachemys scripta elegans</name>
    <name type="common">Red-eared slider turtle</name>
    <name type="synonym">Emys elegans</name>
    <dbReference type="NCBI Taxonomy" id="31138"/>
    <lineage>
        <taxon>Eukaryota</taxon>
        <taxon>Metazoa</taxon>
        <taxon>Chordata</taxon>
        <taxon>Craniata</taxon>
        <taxon>Vertebrata</taxon>
        <taxon>Euteleostomi</taxon>
        <taxon>Archelosauria</taxon>
        <taxon>Testudinata</taxon>
        <taxon>Testudines</taxon>
        <taxon>Cryptodira</taxon>
        <taxon>Durocryptodira</taxon>
        <taxon>Testudinoidea</taxon>
        <taxon>Emydidae</taxon>
        <taxon>Trachemys</taxon>
    </lineage>
</organism>
<feature type="initiator methionine" description="Removed" evidence="1">
    <location>
        <position position="1"/>
    </location>
</feature>
<feature type="chain" id="PRO_0000168428" description="L-lactate dehydrogenase A chain">
    <location>
        <begin position="2"/>
        <end position="332"/>
    </location>
</feature>
<feature type="active site" description="Proton acceptor" evidence="1">
    <location>
        <position position="193"/>
    </location>
</feature>
<feature type="binding site" evidence="1">
    <location>
        <begin position="29"/>
        <end position="57"/>
    </location>
    <ligand>
        <name>NAD(+)</name>
        <dbReference type="ChEBI" id="CHEBI:57540"/>
    </ligand>
</feature>
<feature type="binding site" evidence="1">
    <location>
        <position position="99"/>
    </location>
    <ligand>
        <name>NAD(+)</name>
        <dbReference type="ChEBI" id="CHEBI:57540"/>
    </ligand>
</feature>
<feature type="binding site" evidence="1">
    <location>
        <position position="106"/>
    </location>
    <ligand>
        <name>substrate</name>
    </ligand>
</feature>
<feature type="binding site" evidence="1">
    <location>
        <position position="138"/>
    </location>
    <ligand>
        <name>NAD(+)</name>
        <dbReference type="ChEBI" id="CHEBI:57540"/>
    </ligand>
</feature>
<feature type="binding site" evidence="1">
    <location>
        <position position="138"/>
    </location>
    <ligand>
        <name>substrate</name>
    </ligand>
</feature>
<feature type="binding site" evidence="1">
    <location>
        <position position="169"/>
    </location>
    <ligand>
        <name>substrate</name>
    </ligand>
</feature>
<feature type="binding site" evidence="1">
    <location>
        <position position="248"/>
    </location>
    <ligand>
        <name>substrate</name>
    </ligand>
</feature>
<sequence>MSVKELLIQNVHKEEHSHAHNKITVVGVGAVGMACAISILMKDLADELALVDVIEDKLRGEMLDLQHGSLFLRTPKIVSGKDYSVTAHSKLVIITAGARQQEGESRLNLVQRNVNIFKFIIPNVVKHSPDCTLLVVSNPVDILTYVAWKISGFPKHRVIGSGCNLDSARFRYLMGGKLGIHSLSCHGWIIGEHGDSSVPVWSGVNVAGVSLKALYPDLGTDADKEHWKEVHKQVVDSAYEVIKLKGYTSWAIGLSVADLAETIMRNLRRVHPISTMVKGMYGIHDDVFLSVPCVLGYSGITDVVKMTLKSEEEEKLRKSADTLWGIQKELQF</sequence>
<evidence type="ECO:0000250" key="1"/>
<evidence type="ECO:0000250" key="2">
    <source>
        <dbReference type="UniProtKB" id="P00338"/>
    </source>
</evidence>
<evidence type="ECO:0000305" key="3"/>
<accession>Q9PT43</accession>
<keyword id="KW-0963">Cytoplasm</keyword>
<keyword id="KW-0520">NAD</keyword>
<keyword id="KW-0560">Oxidoreductase</keyword>
<dbReference type="EC" id="1.1.1.27" evidence="2"/>
<dbReference type="EMBL" id="L79953">
    <property type="protein sequence ID" value="AAD46979.1"/>
    <property type="molecule type" value="mRNA"/>
</dbReference>
<dbReference type="SMR" id="Q9PT43"/>
<dbReference type="UniPathway" id="UPA00554">
    <property type="reaction ID" value="UER00611"/>
</dbReference>
<dbReference type="GO" id="GO:0005737">
    <property type="term" value="C:cytoplasm"/>
    <property type="evidence" value="ECO:0007669"/>
    <property type="project" value="UniProtKB-SubCell"/>
</dbReference>
<dbReference type="GO" id="GO:0004459">
    <property type="term" value="F:L-lactate dehydrogenase activity"/>
    <property type="evidence" value="ECO:0007669"/>
    <property type="project" value="UniProtKB-EC"/>
</dbReference>
<dbReference type="GO" id="GO:0006089">
    <property type="term" value="P:lactate metabolic process"/>
    <property type="evidence" value="ECO:0007669"/>
    <property type="project" value="TreeGrafter"/>
</dbReference>
<dbReference type="CDD" id="cd05293">
    <property type="entry name" value="LDH_1"/>
    <property type="match status" value="1"/>
</dbReference>
<dbReference type="FunFam" id="3.40.50.720:FF:000029">
    <property type="entry name" value="L-lactate dehydrogenase A chain"/>
    <property type="match status" value="1"/>
</dbReference>
<dbReference type="FunFam" id="3.90.110.10:FF:000003">
    <property type="entry name" value="L-lactate dehydrogenase A chain"/>
    <property type="match status" value="1"/>
</dbReference>
<dbReference type="Gene3D" id="3.90.110.10">
    <property type="entry name" value="Lactate dehydrogenase/glycoside hydrolase, family 4, C-terminal"/>
    <property type="match status" value="1"/>
</dbReference>
<dbReference type="Gene3D" id="3.40.50.720">
    <property type="entry name" value="NAD(P)-binding Rossmann-like Domain"/>
    <property type="match status" value="1"/>
</dbReference>
<dbReference type="HAMAP" id="MF_00488">
    <property type="entry name" value="Lactate_dehydrog"/>
    <property type="match status" value="1"/>
</dbReference>
<dbReference type="InterPro" id="IPR001557">
    <property type="entry name" value="L-lactate/malate_DH"/>
</dbReference>
<dbReference type="InterPro" id="IPR011304">
    <property type="entry name" value="L-lactate_DH"/>
</dbReference>
<dbReference type="InterPro" id="IPR018177">
    <property type="entry name" value="L-lactate_DH_AS"/>
</dbReference>
<dbReference type="InterPro" id="IPR022383">
    <property type="entry name" value="Lactate/malate_DH_C"/>
</dbReference>
<dbReference type="InterPro" id="IPR001236">
    <property type="entry name" value="Lactate/malate_DH_N"/>
</dbReference>
<dbReference type="InterPro" id="IPR015955">
    <property type="entry name" value="Lactate_DH/Glyco_Ohase_4_C"/>
</dbReference>
<dbReference type="InterPro" id="IPR036291">
    <property type="entry name" value="NAD(P)-bd_dom_sf"/>
</dbReference>
<dbReference type="NCBIfam" id="TIGR01771">
    <property type="entry name" value="L-LDH-NAD"/>
    <property type="match status" value="1"/>
</dbReference>
<dbReference type="PANTHER" id="PTHR43128">
    <property type="entry name" value="L-2-HYDROXYCARBOXYLATE DEHYDROGENASE (NAD(P)(+))"/>
    <property type="match status" value="1"/>
</dbReference>
<dbReference type="PANTHER" id="PTHR43128:SF10">
    <property type="entry name" value="L-LACTATE DEHYDROGENASE A CHAIN"/>
    <property type="match status" value="1"/>
</dbReference>
<dbReference type="Pfam" id="PF02866">
    <property type="entry name" value="Ldh_1_C"/>
    <property type="match status" value="1"/>
</dbReference>
<dbReference type="Pfam" id="PF00056">
    <property type="entry name" value="Ldh_1_N"/>
    <property type="match status" value="1"/>
</dbReference>
<dbReference type="PIRSF" id="PIRSF000102">
    <property type="entry name" value="Lac_mal_DH"/>
    <property type="match status" value="1"/>
</dbReference>
<dbReference type="PRINTS" id="PR00086">
    <property type="entry name" value="LLDHDRGNASE"/>
</dbReference>
<dbReference type="SUPFAM" id="SSF56327">
    <property type="entry name" value="LDH C-terminal domain-like"/>
    <property type="match status" value="1"/>
</dbReference>
<dbReference type="SUPFAM" id="SSF51735">
    <property type="entry name" value="NAD(P)-binding Rossmann-fold domains"/>
    <property type="match status" value="1"/>
</dbReference>
<dbReference type="PROSITE" id="PS00064">
    <property type="entry name" value="L_LDH"/>
    <property type="match status" value="1"/>
</dbReference>
<reference key="1">
    <citation type="journal article" date="1997" name="Mol. Biol. Evol.">
        <title>The cDNA cloning and molecular evolution of reptile and pigeon lactate dehydrogenase isozymes.</title>
        <authorList>
            <person name="Mannen H."/>
            <person name="Tsoi S.C.-M."/>
            <person name="Krushkal J.S."/>
            <person name="Li W.-H."/>
            <person name="Li S.S.-L."/>
        </authorList>
    </citation>
    <scope>NUCLEOTIDE SEQUENCE [MRNA]</scope>
    <source>
        <tissue>Muscle</tissue>
    </source>
</reference>
<comment type="function">
    <text evidence="2">Interconverts simultaneously and stereospecifically pyruvate and lactate with concomitant interconversion of NADH and NAD(+).</text>
</comment>
<comment type="catalytic activity">
    <reaction evidence="2">
        <text>(S)-lactate + NAD(+) = pyruvate + NADH + H(+)</text>
        <dbReference type="Rhea" id="RHEA:23444"/>
        <dbReference type="ChEBI" id="CHEBI:15361"/>
        <dbReference type="ChEBI" id="CHEBI:15378"/>
        <dbReference type="ChEBI" id="CHEBI:16651"/>
        <dbReference type="ChEBI" id="CHEBI:57540"/>
        <dbReference type="ChEBI" id="CHEBI:57945"/>
        <dbReference type="EC" id="1.1.1.27"/>
    </reaction>
    <physiologicalReaction direction="left-to-right" evidence="2">
        <dbReference type="Rhea" id="RHEA:23445"/>
    </physiologicalReaction>
    <physiologicalReaction direction="right-to-left" evidence="2">
        <dbReference type="Rhea" id="RHEA:23446"/>
    </physiologicalReaction>
</comment>
<comment type="pathway">
    <text evidence="2">Fermentation; pyruvate fermentation to lactate; (S)-lactate from pyruvate: step 1/1.</text>
</comment>
<comment type="subunit">
    <text evidence="1">Homotetramer.</text>
</comment>
<comment type="subcellular location">
    <subcellularLocation>
        <location evidence="1">Cytoplasm</location>
    </subcellularLocation>
</comment>
<comment type="similarity">
    <text evidence="3">Belongs to the LDH/MDH superfamily. LDH family.</text>
</comment>
<name>LDHA_TRASE</name>